<evidence type="ECO:0000255" key="1">
    <source>
        <dbReference type="HAMAP-Rule" id="MF_01031"/>
    </source>
</evidence>
<name>LEUD_SHEPW</name>
<dbReference type="EC" id="4.2.1.33" evidence="1"/>
<dbReference type="EMBL" id="CP000472">
    <property type="protein sequence ID" value="ACJ28966.1"/>
    <property type="molecule type" value="Genomic_DNA"/>
</dbReference>
<dbReference type="RefSeq" id="WP_020912327.1">
    <property type="nucleotide sequence ID" value="NC_011566.1"/>
</dbReference>
<dbReference type="SMR" id="B8CM42"/>
<dbReference type="STRING" id="225849.swp_2216"/>
<dbReference type="KEGG" id="swp:swp_2216"/>
<dbReference type="eggNOG" id="COG0066">
    <property type="taxonomic scope" value="Bacteria"/>
</dbReference>
<dbReference type="HOGENOM" id="CLU_081378_0_3_6"/>
<dbReference type="OrthoDB" id="9777465at2"/>
<dbReference type="UniPathway" id="UPA00048">
    <property type="reaction ID" value="UER00071"/>
</dbReference>
<dbReference type="Proteomes" id="UP000000753">
    <property type="component" value="Chromosome"/>
</dbReference>
<dbReference type="GO" id="GO:0009316">
    <property type="term" value="C:3-isopropylmalate dehydratase complex"/>
    <property type="evidence" value="ECO:0007669"/>
    <property type="project" value="InterPro"/>
</dbReference>
<dbReference type="GO" id="GO:0003861">
    <property type="term" value="F:3-isopropylmalate dehydratase activity"/>
    <property type="evidence" value="ECO:0007669"/>
    <property type="project" value="UniProtKB-UniRule"/>
</dbReference>
<dbReference type="GO" id="GO:0009098">
    <property type="term" value="P:L-leucine biosynthetic process"/>
    <property type="evidence" value="ECO:0007669"/>
    <property type="project" value="UniProtKB-UniRule"/>
</dbReference>
<dbReference type="CDD" id="cd01577">
    <property type="entry name" value="IPMI_Swivel"/>
    <property type="match status" value="1"/>
</dbReference>
<dbReference type="FunFam" id="3.20.19.10:FF:000003">
    <property type="entry name" value="3-isopropylmalate dehydratase small subunit"/>
    <property type="match status" value="1"/>
</dbReference>
<dbReference type="Gene3D" id="3.20.19.10">
    <property type="entry name" value="Aconitase, domain 4"/>
    <property type="match status" value="1"/>
</dbReference>
<dbReference type="HAMAP" id="MF_01031">
    <property type="entry name" value="LeuD_type1"/>
    <property type="match status" value="1"/>
</dbReference>
<dbReference type="InterPro" id="IPR004431">
    <property type="entry name" value="3-IsopropMal_deHydase_ssu"/>
</dbReference>
<dbReference type="InterPro" id="IPR015928">
    <property type="entry name" value="Aconitase/3IPM_dehydase_swvl"/>
</dbReference>
<dbReference type="InterPro" id="IPR000573">
    <property type="entry name" value="AconitaseA/IPMdHydase_ssu_swvl"/>
</dbReference>
<dbReference type="InterPro" id="IPR033940">
    <property type="entry name" value="IPMI_Swivel"/>
</dbReference>
<dbReference type="InterPro" id="IPR050075">
    <property type="entry name" value="LeuD"/>
</dbReference>
<dbReference type="NCBIfam" id="TIGR00171">
    <property type="entry name" value="leuD"/>
    <property type="match status" value="1"/>
</dbReference>
<dbReference type="NCBIfam" id="NF002458">
    <property type="entry name" value="PRK01641.1"/>
    <property type="match status" value="1"/>
</dbReference>
<dbReference type="PANTHER" id="PTHR43345:SF5">
    <property type="entry name" value="3-ISOPROPYLMALATE DEHYDRATASE SMALL SUBUNIT"/>
    <property type="match status" value="1"/>
</dbReference>
<dbReference type="PANTHER" id="PTHR43345">
    <property type="entry name" value="3-ISOPROPYLMALATE DEHYDRATASE SMALL SUBUNIT 2-RELATED-RELATED"/>
    <property type="match status" value="1"/>
</dbReference>
<dbReference type="Pfam" id="PF00694">
    <property type="entry name" value="Aconitase_C"/>
    <property type="match status" value="1"/>
</dbReference>
<dbReference type="SUPFAM" id="SSF52016">
    <property type="entry name" value="LeuD/IlvD-like"/>
    <property type="match status" value="1"/>
</dbReference>
<protein>
    <recommendedName>
        <fullName evidence="1">3-isopropylmalate dehydratase small subunit</fullName>
        <ecNumber evidence="1">4.2.1.33</ecNumber>
    </recommendedName>
    <alternativeName>
        <fullName evidence="1">Alpha-IPM isomerase</fullName>
        <shortName evidence="1">IPMI</shortName>
    </alternativeName>
    <alternativeName>
        <fullName evidence="1">Isopropylmalate isomerase</fullName>
    </alternativeName>
</protein>
<sequence>MQPFIAHTGLAVIIDSANVDTDQIIPKQFLSKVTRDGFGIHLFHDWRYLDDAGDQPNPDFNLNKPRYKGASILVSQENFGCGSSREHAPWALADFGLKAIIAPSFADIFYGNSINNGLLPVKLTEAEVEQIMAEVEALPGADVTVDLQALTVTSPSGSVFSFEIAESARHNLLNGLDAIGLTLAHGDAISHYEANLPAWRA</sequence>
<accession>B8CM42</accession>
<gene>
    <name evidence="1" type="primary">leuD</name>
    <name type="ordered locus">swp_2216</name>
</gene>
<reference key="1">
    <citation type="journal article" date="2008" name="PLoS ONE">
        <title>Environmental adaptation: genomic analysis of the piezotolerant and psychrotolerant deep-sea iron reducing bacterium Shewanella piezotolerans WP3.</title>
        <authorList>
            <person name="Wang F."/>
            <person name="Wang J."/>
            <person name="Jian H."/>
            <person name="Zhang B."/>
            <person name="Li S."/>
            <person name="Wang F."/>
            <person name="Zeng X."/>
            <person name="Gao L."/>
            <person name="Bartlett D.H."/>
            <person name="Yu J."/>
            <person name="Hu S."/>
            <person name="Xiao X."/>
        </authorList>
    </citation>
    <scope>NUCLEOTIDE SEQUENCE [LARGE SCALE GENOMIC DNA]</scope>
    <source>
        <strain>WP3 / JCM 13877</strain>
    </source>
</reference>
<comment type="function">
    <text evidence="1">Catalyzes the isomerization between 2-isopropylmalate and 3-isopropylmalate, via the formation of 2-isopropylmaleate.</text>
</comment>
<comment type="catalytic activity">
    <reaction evidence="1">
        <text>(2R,3S)-3-isopropylmalate = (2S)-2-isopropylmalate</text>
        <dbReference type="Rhea" id="RHEA:32287"/>
        <dbReference type="ChEBI" id="CHEBI:1178"/>
        <dbReference type="ChEBI" id="CHEBI:35121"/>
        <dbReference type="EC" id="4.2.1.33"/>
    </reaction>
</comment>
<comment type="pathway">
    <text evidence="1">Amino-acid biosynthesis; L-leucine biosynthesis; L-leucine from 3-methyl-2-oxobutanoate: step 2/4.</text>
</comment>
<comment type="subunit">
    <text evidence="1">Heterodimer of LeuC and LeuD.</text>
</comment>
<comment type="similarity">
    <text evidence="1">Belongs to the LeuD family. LeuD type 1 subfamily.</text>
</comment>
<proteinExistence type="inferred from homology"/>
<organism>
    <name type="scientific">Shewanella piezotolerans (strain WP3 / JCM 13877)</name>
    <dbReference type="NCBI Taxonomy" id="225849"/>
    <lineage>
        <taxon>Bacteria</taxon>
        <taxon>Pseudomonadati</taxon>
        <taxon>Pseudomonadota</taxon>
        <taxon>Gammaproteobacteria</taxon>
        <taxon>Alteromonadales</taxon>
        <taxon>Shewanellaceae</taxon>
        <taxon>Shewanella</taxon>
    </lineage>
</organism>
<feature type="chain" id="PRO_1000135833" description="3-isopropylmalate dehydratase small subunit">
    <location>
        <begin position="1"/>
        <end position="201"/>
    </location>
</feature>
<keyword id="KW-0028">Amino-acid biosynthesis</keyword>
<keyword id="KW-0100">Branched-chain amino acid biosynthesis</keyword>
<keyword id="KW-0432">Leucine biosynthesis</keyword>
<keyword id="KW-0456">Lyase</keyword>